<protein>
    <recommendedName>
        <fullName evidence="5">Spheroidene monooxygenase</fullName>
        <ecNumber evidence="4">1.14.15.9</ecNumber>
    </recommendedName>
    <alternativeName>
        <fullName evidence="6">Acyclic carotenoid 2-ketolase</fullName>
    </alternativeName>
    <alternativeName>
        <fullName evidence="8">Spheroidene/spirilloxanthin monooxygenase</fullName>
    </alternativeName>
</protein>
<accession>Q83YH3</accession>
<reference evidence="11" key="1">
    <citation type="journal article" date="1997" name="J. Biol. Chem.">
        <title>Pleiotropic effects of puf interposon mutagenesis on carotenoid biosynthesis in Rubrivivax gelatinosus. A new gene organization in purple bacteria.</title>
        <authorList>
            <person name="Ouchane S."/>
            <person name="Picaud M."/>
            <person name="Vernotte C."/>
            <person name="Reiss-Husson F."/>
            <person name="Astier C."/>
        </authorList>
    </citation>
    <scope>NUCLEOTIDE SEQUENCE [GENOMIC DNA]</scope>
    <source>
        <strain>S1</strain>
    </source>
</reference>
<reference key="2">
    <citation type="journal article" date="2003" name="Arch. Microbiol.">
        <title>Characterization of unusual hydroxy- and ketocarotenoids in Rubrivivax gelatinosus: involvement of enzyme CrtF or CrtA.</title>
        <authorList>
            <person name="Pinta V."/>
            <person name="Ouchane S."/>
            <person name="Picaud M."/>
            <person name="Takaichi S."/>
            <person name="Astier C."/>
            <person name="Reiss-Husson F."/>
        </authorList>
    </citation>
    <scope>FUNCTION</scope>
    <scope>DISRUPTION PHENOTYPE</scope>
    <source>
        <strain>S1</strain>
    </source>
</reference>
<reference key="3">
    <citation type="journal article" date="2009" name="Biochim. Biophys. Acta">
        <title>Catalytic properties of the expressed acyclic carotenoid 2-ketolases from Rhodobacter capsulatus and Rubrivivax gelatinosus.</title>
        <authorList>
            <person name="Gerjets T."/>
            <person name="Steiger S."/>
            <person name="Sandmann G."/>
        </authorList>
    </citation>
    <scope>FUNCTION</scope>
    <scope>CATALYTIC ACTIVITY</scope>
    <scope>BIOPHYSICOCHEMICAL PROPERTIES</scope>
    <source>
        <strain>S1</strain>
    </source>
</reference>
<keyword id="KW-0125">Carotenoid biosynthesis</keyword>
<keyword id="KW-0349">Heme</keyword>
<keyword id="KW-0408">Iron</keyword>
<keyword id="KW-0479">Metal-binding</keyword>
<keyword id="KW-0503">Monooxygenase</keyword>
<keyword id="KW-0560">Oxidoreductase</keyword>
<name>CRTA_RUBGE</name>
<dbReference type="EC" id="1.14.15.9" evidence="4"/>
<dbReference type="EMBL" id="AH012710">
    <property type="protein sequence ID" value="AAO93123.1"/>
    <property type="molecule type" value="Genomic_DNA"/>
</dbReference>
<dbReference type="BioCyc" id="MetaCyc:MONOMER-15844"/>
<dbReference type="UniPathway" id="UPA00683"/>
<dbReference type="UniPathway" id="UPA01027"/>
<dbReference type="GO" id="GO:0046872">
    <property type="term" value="F:metal ion binding"/>
    <property type="evidence" value="ECO:0007669"/>
    <property type="project" value="UniProtKB-KW"/>
</dbReference>
<dbReference type="GO" id="GO:0004497">
    <property type="term" value="F:monooxygenase activity"/>
    <property type="evidence" value="ECO:0007669"/>
    <property type="project" value="UniProtKB-KW"/>
</dbReference>
<dbReference type="GO" id="GO:0016117">
    <property type="term" value="P:carotenoid biosynthetic process"/>
    <property type="evidence" value="ECO:0007669"/>
    <property type="project" value="UniProtKB-KW"/>
</dbReference>
<dbReference type="CDD" id="cd21650">
    <property type="entry name" value="CrtA-like"/>
    <property type="match status" value="1"/>
</dbReference>
<dbReference type="InterPro" id="IPR049574">
    <property type="entry name" value="CrtA-like"/>
</dbReference>
<dbReference type="InterPro" id="IPR011008">
    <property type="entry name" value="Dimeric_a/b-barrel"/>
</dbReference>
<dbReference type="SUPFAM" id="SSF54909">
    <property type="entry name" value="Dimeric alpha+beta barrel"/>
    <property type="match status" value="1"/>
</dbReference>
<evidence type="ECO:0000250" key="1">
    <source>
        <dbReference type="UniProtKB" id="Q3J189"/>
    </source>
</evidence>
<evidence type="ECO:0000256" key="2">
    <source>
        <dbReference type="SAM" id="MobiDB-lite"/>
    </source>
</evidence>
<evidence type="ECO:0000269" key="3">
    <source>
    </source>
</evidence>
<evidence type="ECO:0000269" key="4">
    <source>
    </source>
</evidence>
<evidence type="ECO:0000303" key="5">
    <source>
    </source>
</evidence>
<evidence type="ECO:0000303" key="6">
    <source>
    </source>
</evidence>
<evidence type="ECO:0000303" key="7">
    <source>
    </source>
</evidence>
<evidence type="ECO:0000305" key="8"/>
<evidence type="ECO:0000305" key="9">
    <source>
    </source>
</evidence>
<evidence type="ECO:0000305" key="10">
    <source>
    </source>
</evidence>
<evidence type="ECO:0000312" key="11">
    <source>
        <dbReference type="EMBL" id="AAO93123.1"/>
    </source>
</evidence>
<sequence length="256" mass="27281">MTNELSNAAGASQQGPAASSFSADTPPRTTAGGDVLVLLLIDVAPAARLWGYGRFVAGTTPALGEPGARFAKQLGTGYEGGFGLRPSATRQGLFVLFEDEAAADAFIGRSELVQTYRRNARELCIVKARPYSARGSWDGQKLRVGSPAPVDGPVAALTRASIRPSQAHRFWPNAGPSQDSLERAAGCRLAVGLGEAPFLRQATFSVWDSVAAMDAYARTGAHQRAIVASRDFFSESMFVRFVPLSIEGVWKGRRYG</sequence>
<feature type="chain" id="PRO_0000461798" description="Spheroidene monooxygenase">
    <location>
        <begin position="1"/>
        <end position="256"/>
    </location>
</feature>
<feature type="region of interest" description="Disordered" evidence="2">
    <location>
        <begin position="1"/>
        <end position="26"/>
    </location>
</feature>
<feature type="compositionally biased region" description="Low complexity" evidence="2">
    <location>
        <begin position="1"/>
        <end position="23"/>
    </location>
</feature>
<organism>
    <name type="scientific">Rubrivivax gelatinosus</name>
    <name type="common">Rhodocyclus gelatinosus</name>
    <name type="synonym">Rhodopseudomonas gelatinosa</name>
    <dbReference type="NCBI Taxonomy" id="28068"/>
    <lineage>
        <taxon>Bacteria</taxon>
        <taxon>Pseudomonadati</taxon>
        <taxon>Pseudomonadota</taxon>
        <taxon>Betaproteobacteria</taxon>
        <taxon>Burkholderiales</taxon>
        <taxon>Sphaerotilaceae</taxon>
        <taxon>Rubrivivax</taxon>
    </lineage>
</organism>
<proteinExistence type="evidence at protein level"/>
<comment type="function">
    <text evidence="3 4">Involved in the biosynthesis of the carotenoids spheroidene and spirilloxanthin (PubMed:12664193, PubMed:19136077). Catalyzes the introduction of one keto group at the C-2 position of spheroidene and two keto groups at the C-2 and C-2' positions of spirilloxanthin (PubMed:19136077).</text>
</comment>
<comment type="catalytic activity">
    <reaction evidence="4">
        <text>spheroidene + 4 reduced [2Fe-2S]-[ferredoxin] + 2 O2 + 4 H(+) = spheroiden-2-one + 4 oxidized [2Fe-2S]-[ferredoxin] + 3 H2O</text>
        <dbReference type="Rhea" id="RHEA:33027"/>
        <dbReference type="Rhea" id="RHEA-COMP:10000"/>
        <dbReference type="Rhea" id="RHEA-COMP:10001"/>
        <dbReference type="ChEBI" id="CHEBI:15377"/>
        <dbReference type="ChEBI" id="CHEBI:15378"/>
        <dbReference type="ChEBI" id="CHEBI:15379"/>
        <dbReference type="ChEBI" id="CHEBI:33737"/>
        <dbReference type="ChEBI" id="CHEBI:33738"/>
        <dbReference type="ChEBI" id="CHEBI:35330"/>
        <dbReference type="ChEBI" id="CHEBI:62480"/>
        <dbReference type="EC" id="1.14.15.9"/>
    </reaction>
    <physiologicalReaction direction="left-to-right" evidence="10">
        <dbReference type="Rhea" id="RHEA:33028"/>
    </physiologicalReaction>
</comment>
<comment type="catalytic activity">
    <reaction evidence="4">
        <text>spirilloxanthin + 4 reduced [2Fe-2S]-[ferredoxin] + 2 O2 + 4 H(+) = 2-oxospirilloxanthin + 4 oxidized [2Fe-2S]-[ferredoxin] + 3 H2O</text>
        <dbReference type="Rhea" id="RHEA:33039"/>
        <dbReference type="Rhea" id="RHEA-COMP:10000"/>
        <dbReference type="Rhea" id="RHEA-COMP:10001"/>
        <dbReference type="ChEBI" id="CHEBI:15377"/>
        <dbReference type="ChEBI" id="CHEBI:15378"/>
        <dbReference type="ChEBI" id="CHEBI:15379"/>
        <dbReference type="ChEBI" id="CHEBI:33737"/>
        <dbReference type="ChEBI" id="CHEBI:33738"/>
        <dbReference type="ChEBI" id="CHEBI:35328"/>
        <dbReference type="ChEBI" id="CHEBI:64792"/>
        <dbReference type="EC" id="1.14.15.9"/>
    </reaction>
    <physiologicalReaction direction="left-to-right" evidence="10">
        <dbReference type="Rhea" id="RHEA:33040"/>
    </physiologicalReaction>
</comment>
<comment type="catalytic activity">
    <reaction evidence="4">
        <text>2-oxospirilloxanthin + 4 reduced [2Fe-2S]-[ferredoxin] + 2 O2 + 4 H(+) = 2,2'-dioxospirilloxanthin + 4 oxidized [2Fe-2S]-[ferredoxin] + 3 H2O</text>
        <dbReference type="Rhea" id="RHEA:33035"/>
        <dbReference type="Rhea" id="RHEA-COMP:10000"/>
        <dbReference type="Rhea" id="RHEA-COMP:10001"/>
        <dbReference type="ChEBI" id="CHEBI:15377"/>
        <dbReference type="ChEBI" id="CHEBI:15378"/>
        <dbReference type="ChEBI" id="CHEBI:15379"/>
        <dbReference type="ChEBI" id="CHEBI:33737"/>
        <dbReference type="ChEBI" id="CHEBI:33738"/>
        <dbReference type="ChEBI" id="CHEBI:64792"/>
        <dbReference type="ChEBI" id="CHEBI:64793"/>
        <dbReference type="EC" id="1.14.15.9"/>
    </reaction>
    <physiologicalReaction direction="left-to-right" evidence="10">
        <dbReference type="Rhea" id="RHEA:33036"/>
    </physiologicalReaction>
</comment>
<comment type="catalytic activity">
    <reaction evidence="10">
        <text>spheroidene + 2 reduced [2Fe-2S]-[ferredoxin] + O2 + 2 H(+) = 2-hydroxyspheroidene + 2 oxidized [2Fe-2S]-[ferredoxin] + H2O</text>
        <dbReference type="Rhea" id="RHEA:49328"/>
        <dbReference type="Rhea" id="RHEA-COMP:10000"/>
        <dbReference type="Rhea" id="RHEA-COMP:10001"/>
        <dbReference type="ChEBI" id="CHEBI:15377"/>
        <dbReference type="ChEBI" id="CHEBI:15378"/>
        <dbReference type="ChEBI" id="CHEBI:15379"/>
        <dbReference type="ChEBI" id="CHEBI:33737"/>
        <dbReference type="ChEBI" id="CHEBI:33738"/>
        <dbReference type="ChEBI" id="CHEBI:35330"/>
        <dbReference type="ChEBI" id="CHEBI:91221"/>
    </reaction>
    <physiologicalReaction direction="left-to-right" evidence="10">
        <dbReference type="Rhea" id="RHEA:49329"/>
    </physiologicalReaction>
</comment>
<comment type="catalytic activity">
    <reaction evidence="10">
        <text>2-hydroxyspheroidene + 2 reduced [2Fe-2S]-[ferredoxin] + O2 + 2 H(+) = 2,2-dihydroxyspheroidene + 2 oxidized [2Fe-2S]-[ferredoxin] + H2O</text>
        <dbReference type="Rhea" id="RHEA:49332"/>
        <dbReference type="Rhea" id="RHEA-COMP:10000"/>
        <dbReference type="Rhea" id="RHEA-COMP:10001"/>
        <dbReference type="ChEBI" id="CHEBI:15377"/>
        <dbReference type="ChEBI" id="CHEBI:15378"/>
        <dbReference type="ChEBI" id="CHEBI:15379"/>
        <dbReference type="ChEBI" id="CHEBI:33737"/>
        <dbReference type="ChEBI" id="CHEBI:33738"/>
        <dbReference type="ChEBI" id="CHEBI:91221"/>
        <dbReference type="ChEBI" id="CHEBI:91223"/>
    </reaction>
    <physiologicalReaction direction="left-to-right" evidence="10">
        <dbReference type="Rhea" id="RHEA:49333"/>
    </physiologicalReaction>
</comment>
<comment type="catalytic activity">
    <reaction evidence="10">
        <text>2,2-dihydroxyspheroidene = spheroiden-2-one + H2O</text>
        <dbReference type="Rhea" id="RHEA:49336"/>
        <dbReference type="ChEBI" id="CHEBI:15377"/>
        <dbReference type="ChEBI" id="CHEBI:62480"/>
        <dbReference type="ChEBI" id="CHEBI:91223"/>
    </reaction>
    <physiologicalReaction direction="left-to-right" evidence="10">
        <dbReference type="Rhea" id="RHEA:49337"/>
    </physiologicalReaction>
</comment>
<comment type="catalytic activity">
    <reaction evidence="10">
        <text>spirilloxanthin + 2 reduced [2Fe-2S]-[ferredoxin] + O2 + 2 H(+) = 2-hydroxyspirilloxanthin + 2 oxidized [2Fe-2S]-[ferredoxin] + H2O</text>
        <dbReference type="Rhea" id="RHEA:49340"/>
        <dbReference type="Rhea" id="RHEA-COMP:10000"/>
        <dbReference type="Rhea" id="RHEA-COMP:10001"/>
        <dbReference type="ChEBI" id="CHEBI:15377"/>
        <dbReference type="ChEBI" id="CHEBI:15378"/>
        <dbReference type="ChEBI" id="CHEBI:15379"/>
        <dbReference type="ChEBI" id="CHEBI:33737"/>
        <dbReference type="ChEBI" id="CHEBI:33738"/>
        <dbReference type="ChEBI" id="CHEBI:35328"/>
        <dbReference type="ChEBI" id="CHEBI:91227"/>
    </reaction>
    <physiologicalReaction direction="left-to-right" evidence="10">
        <dbReference type="Rhea" id="RHEA:49341"/>
    </physiologicalReaction>
</comment>
<comment type="catalytic activity">
    <reaction evidence="10">
        <text>2-hydroxyspirilloxanthin + 2 reduced [2Fe-2S]-[ferredoxin] + O2 + 2 H(+) = 2,2-dihydroxyspirilloxanthin + 2 oxidized [2Fe-2S]-[ferredoxin] + H2O</text>
        <dbReference type="Rhea" id="RHEA:49344"/>
        <dbReference type="Rhea" id="RHEA-COMP:10000"/>
        <dbReference type="Rhea" id="RHEA-COMP:10001"/>
        <dbReference type="ChEBI" id="CHEBI:15377"/>
        <dbReference type="ChEBI" id="CHEBI:15378"/>
        <dbReference type="ChEBI" id="CHEBI:15379"/>
        <dbReference type="ChEBI" id="CHEBI:33737"/>
        <dbReference type="ChEBI" id="CHEBI:33738"/>
        <dbReference type="ChEBI" id="CHEBI:91227"/>
        <dbReference type="ChEBI" id="CHEBI:91228"/>
    </reaction>
    <physiologicalReaction direction="left-to-right" evidence="10">
        <dbReference type="Rhea" id="RHEA:49345"/>
    </physiologicalReaction>
</comment>
<comment type="catalytic activity">
    <reaction evidence="10">
        <text>2,2-dihydroxyspirilloxanthin = 2-oxospirilloxanthin + H2O</text>
        <dbReference type="Rhea" id="RHEA:49348"/>
        <dbReference type="ChEBI" id="CHEBI:15377"/>
        <dbReference type="ChEBI" id="CHEBI:64792"/>
        <dbReference type="ChEBI" id="CHEBI:91228"/>
    </reaction>
    <physiologicalReaction direction="left-to-right" evidence="10">
        <dbReference type="Rhea" id="RHEA:49349"/>
    </physiologicalReaction>
</comment>
<comment type="catalytic activity">
    <reaction evidence="10">
        <text>2-oxospirilloxanthin + 2 reduced [2Fe-2S]-[ferredoxin] + O2 + 2 H(+) = 2'-hydroxy-2-oxospirilloxanthin + 2 oxidized [2Fe-2S]-[ferredoxin] + H2O</text>
        <dbReference type="Rhea" id="RHEA:49352"/>
        <dbReference type="Rhea" id="RHEA-COMP:10000"/>
        <dbReference type="Rhea" id="RHEA-COMP:10001"/>
        <dbReference type="ChEBI" id="CHEBI:15377"/>
        <dbReference type="ChEBI" id="CHEBI:15378"/>
        <dbReference type="ChEBI" id="CHEBI:15379"/>
        <dbReference type="ChEBI" id="CHEBI:33737"/>
        <dbReference type="ChEBI" id="CHEBI:33738"/>
        <dbReference type="ChEBI" id="CHEBI:64792"/>
        <dbReference type="ChEBI" id="CHEBI:91229"/>
    </reaction>
    <physiologicalReaction direction="left-to-right" evidence="10">
        <dbReference type="Rhea" id="RHEA:49353"/>
    </physiologicalReaction>
</comment>
<comment type="catalytic activity">
    <reaction evidence="10">
        <text>2'-hydroxy-2-oxospirilloxanthin + 2 reduced [2Fe-2S]-[ferredoxin] + O2 + 2 H(+) = 2',2'-dihydroxy-2-oxospirilloxanthin + 2 oxidized [2Fe-2S]-[ferredoxin] + H2O</text>
        <dbReference type="Rhea" id="RHEA:49356"/>
        <dbReference type="Rhea" id="RHEA-COMP:10000"/>
        <dbReference type="Rhea" id="RHEA-COMP:10001"/>
        <dbReference type="ChEBI" id="CHEBI:15377"/>
        <dbReference type="ChEBI" id="CHEBI:15378"/>
        <dbReference type="ChEBI" id="CHEBI:15379"/>
        <dbReference type="ChEBI" id="CHEBI:33737"/>
        <dbReference type="ChEBI" id="CHEBI:33738"/>
        <dbReference type="ChEBI" id="CHEBI:91229"/>
        <dbReference type="ChEBI" id="CHEBI:91230"/>
    </reaction>
    <physiologicalReaction direction="left-to-right" evidence="10">
        <dbReference type="Rhea" id="RHEA:49357"/>
    </physiologicalReaction>
</comment>
<comment type="catalytic activity">
    <reaction evidence="10">
        <text>2',2'-dihydroxy-2-oxospirilloxanthin = 2,2'-dioxospirilloxanthin + H2O</text>
        <dbReference type="Rhea" id="RHEA:49360"/>
        <dbReference type="ChEBI" id="CHEBI:15377"/>
        <dbReference type="ChEBI" id="CHEBI:64793"/>
        <dbReference type="ChEBI" id="CHEBI:91230"/>
    </reaction>
    <physiologicalReaction direction="left-to-right" evidence="10">
        <dbReference type="Rhea" id="RHEA:49361"/>
    </physiologicalReaction>
</comment>
<comment type="cofactor">
    <cofactor evidence="1">
        <name>heme</name>
        <dbReference type="ChEBI" id="CHEBI:30413"/>
    </cofactor>
    <text evidence="1">Binds 1 heme per subunit.</text>
</comment>
<comment type="biophysicochemical properties">
    <kinetics>
        <KM evidence="4">7 uM for spheroidene</KM>
        <KM evidence="4">15.5 uM for HO-spheroidene</KM>
        <KM evidence="4">18.1 uM for spirilloxanthin (formation of 2-oxospirilloxanthin)</KM>
        <KM evidence="4">9.1 uM for spirilloxanthin (formation of 2,2'-dioxospririlloxanthin)</KM>
        <Vmax evidence="4">1.149 umol/h/mg enzyme with spheroidene as substrate</Vmax>
        <Vmax evidence="4">2.63 umol/h/mg enzyme with HO-spheroidene as substrate</Vmax>
        <Vmax evidence="4">1.844 umol/h/mg enzyme with spirilloxanthin as substrate (formation of 2-oxospririlloxanthin)</Vmax>
        <Vmax evidence="4">0.948 umol/h/mg enzyme with spirilloxanthin as substrate (formation of 2,2'-dioxospririlloxanthin)</Vmax>
    </kinetics>
</comment>
<comment type="pathway">
    <text evidence="9 10">Carotenoid biosynthesis; spheroidene biosynthesis.</text>
</comment>
<comment type="pathway">
    <text evidence="9 10">Carotenoid biosynthesis; spirilloxanthin biosynthesis.</text>
</comment>
<comment type="disruption phenotype">
    <text evidence="3">The mutant, when grown photosynthetically and chemoheterotrophically, produces hydroxyspheroidene, hydroxyneurosporene, spheroidene and spirilloxanthin, but does not produce ketocarotenoids.</text>
</comment>
<comment type="similarity">
    <text evidence="8">Belongs to the CrtA family.</text>
</comment>
<gene>
    <name evidence="7" type="primary">crtA</name>
</gene>